<reference key="1">
    <citation type="journal article" date="1999" name="DNA Res.">
        <title>Complete genome sequence of an aerobic hyper-thermophilic crenarchaeon, Aeropyrum pernix K1.</title>
        <authorList>
            <person name="Kawarabayasi Y."/>
            <person name="Hino Y."/>
            <person name="Horikawa H."/>
            <person name="Yamazaki S."/>
            <person name="Haikawa Y."/>
            <person name="Jin-no K."/>
            <person name="Takahashi M."/>
            <person name="Sekine M."/>
            <person name="Baba S."/>
            <person name="Ankai A."/>
            <person name="Kosugi H."/>
            <person name="Hosoyama A."/>
            <person name="Fukui S."/>
            <person name="Nagai Y."/>
            <person name="Nishijima K."/>
            <person name="Nakazawa H."/>
            <person name="Takamiya M."/>
            <person name="Masuda S."/>
            <person name="Funahashi T."/>
            <person name="Tanaka T."/>
            <person name="Kudoh Y."/>
            <person name="Yamazaki J."/>
            <person name="Kushida N."/>
            <person name="Oguchi A."/>
            <person name="Aoki K."/>
            <person name="Kubota K."/>
            <person name="Nakamura Y."/>
            <person name="Nomura N."/>
            <person name="Sako Y."/>
            <person name="Kikuchi H."/>
        </authorList>
    </citation>
    <scope>NUCLEOTIDE SEQUENCE [LARGE SCALE GENOMIC DNA]</scope>
    <source>
        <strain>ATCC 700893 / DSM 11879 / JCM 9820 / NBRC 100138 / K1</strain>
    </source>
</reference>
<organism>
    <name type="scientific">Aeropyrum pernix (strain ATCC 700893 / DSM 11879 / JCM 9820 / NBRC 100138 / K1)</name>
    <dbReference type="NCBI Taxonomy" id="272557"/>
    <lineage>
        <taxon>Archaea</taxon>
        <taxon>Thermoproteota</taxon>
        <taxon>Thermoprotei</taxon>
        <taxon>Desulfurococcales</taxon>
        <taxon>Desulfurococcaceae</taxon>
        <taxon>Aeropyrum</taxon>
    </lineage>
</organism>
<proteinExistence type="inferred from homology"/>
<evidence type="ECO:0000250" key="1"/>
<evidence type="ECO:0000305" key="2"/>
<dbReference type="EMBL" id="BA000002">
    <property type="protein sequence ID" value="BAA80532.2"/>
    <property type="molecule type" value="Genomic_DNA"/>
</dbReference>
<dbReference type="PIR" id="F72634">
    <property type="entry name" value="F72634"/>
</dbReference>
<dbReference type="RefSeq" id="WP_010866430.1">
    <property type="nucleotide sequence ID" value="NC_000854.2"/>
</dbReference>
<dbReference type="SMR" id="Q9YBR6"/>
<dbReference type="STRING" id="272557.APE_1533.1"/>
<dbReference type="EnsemblBacteria" id="BAA80532">
    <property type="protein sequence ID" value="BAA80532"/>
    <property type="gene ID" value="APE_1533.1"/>
</dbReference>
<dbReference type="GeneID" id="1446077"/>
<dbReference type="KEGG" id="ape:APE_1533.1"/>
<dbReference type="eggNOG" id="arCOG01640">
    <property type="taxonomic scope" value="Archaea"/>
</dbReference>
<dbReference type="Proteomes" id="UP000002518">
    <property type="component" value="Chromosome"/>
</dbReference>
<dbReference type="GO" id="GO:0003743">
    <property type="term" value="F:translation initiation factor activity"/>
    <property type="evidence" value="ECO:0007669"/>
    <property type="project" value="UniProtKB-UniRule"/>
</dbReference>
<dbReference type="FunFam" id="3.30.30.170:FF:000001">
    <property type="entry name" value="Eukaryotic translation initiation factor 2 subunit"/>
    <property type="match status" value="1"/>
</dbReference>
<dbReference type="Gene3D" id="3.30.30.170">
    <property type="match status" value="1"/>
</dbReference>
<dbReference type="HAMAP" id="MF_00232">
    <property type="entry name" value="eIF_2_beta"/>
    <property type="match status" value="1"/>
</dbReference>
<dbReference type="InterPro" id="IPR045196">
    <property type="entry name" value="IF2/IF5"/>
</dbReference>
<dbReference type="InterPro" id="IPR004458">
    <property type="entry name" value="TIF2_bsu_arc"/>
</dbReference>
<dbReference type="InterPro" id="IPR002735">
    <property type="entry name" value="Transl_init_fac_IF2/IF5_dom"/>
</dbReference>
<dbReference type="InterPro" id="IPR016189">
    <property type="entry name" value="Transl_init_fac_IF2/IF5_N"/>
</dbReference>
<dbReference type="InterPro" id="IPR016190">
    <property type="entry name" value="Transl_init_fac_IF2/IF5_Zn-bd"/>
</dbReference>
<dbReference type="NCBIfam" id="NF003067">
    <property type="entry name" value="PRK03988.1"/>
    <property type="match status" value="1"/>
</dbReference>
<dbReference type="PANTHER" id="PTHR23001">
    <property type="entry name" value="EUKARYOTIC TRANSLATION INITIATION FACTOR"/>
    <property type="match status" value="1"/>
</dbReference>
<dbReference type="PANTHER" id="PTHR23001:SF3">
    <property type="entry name" value="EUKARYOTIC TRANSLATION INITIATION FACTOR 2 SUBUNIT 2"/>
    <property type="match status" value="1"/>
</dbReference>
<dbReference type="Pfam" id="PF01873">
    <property type="entry name" value="eIF-5_eIF-2B"/>
    <property type="match status" value="1"/>
</dbReference>
<dbReference type="SMART" id="SM00653">
    <property type="entry name" value="eIF2B_5"/>
    <property type="match status" value="1"/>
</dbReference>
<dbReference type="SUPFAM" id="SSF100966">
    <property type="entry name" value="Translation initiation factor 2 beta, aIF2beta, N-terminal domain"/>
    <property type="match status" value="1"/>
</dbReference>
<dbReference type="SUPFAM" id="SSF75689">
    <property type="entry name" value="Zinc-binding domain of translation initiation factor 2 beta"/>
    <property type="match status" value="1"/>
</dbReference>
<accession>Q9YBR6</accession>
<sequence length="148" mass="16978">MSGSVLDEEAEKLMDYDYLLEKLYKKVPPKSGTSEYRIPEPQIIRIGSQTVIRNFREIAQALKRDPKLVARYLQKELATAASYEEESGQLILNVKVSRKVVNQFLQLFMKTYVRCPTCGSIDTKLLRQERAYMLKCEACGAEQPVKPI</sequence>
<name>IF2B_AERPE</name>
<gene>
    <name type="primary">eif2b</name>
    <name type="ordered locus">APE_1533.1</name>
</gene>
<protein>
    <recommendedName>
        <fullName>Translation initiation factor 2 subunit beta</fullName>
    </recommendedName>
    <alternativeName>
        <fullName>aIF2-beta</fullName>
    </alternativeName>
    <alternativeName>
        <fullName>eIF-2-beta</fullName>
    </alternativeName>
</protein>
<comment type="function">
    <text evidence="1">eIF-2 functions in the early steps of protein synthesis by forming a ternary complex with GTP and initiator tRNA.</text>
</comment>
<comment type="subunit">
    <text evidence="1">Heterotrimer composed of an alpha, a beta and a gamma chain.</text>
</comment>
<comment type="similarity">
    <text evidence="2">Belongs to the eIF-2-beta/eIF-5 family.</text>
</comment>
<keyword id="KW-0396">Initiation factor</keyword>
<keyword id="KW-0648">Protein biosynthesis</keyword>
<keyword id="KW-1185">Reference proteome</keyword>
<feature type="chain" id="PRO_0000137416" description="Translation initiation factor 2 subunit beta">
    <location>
        <begin position="1"/>
        <end position="148"/>
    </location>
</feature>